<dbReference type="EMBL" id="AF255305">
    <property type="protein sequence ID" value="AAF65572.1"/>
    <property type="molecule type" value="mRNA"/>
</dbReference>
<dbReference type="EMBL" id="BC158586">
    <property type="protein sequence ID" value="AAI58587.1"/>
    <property type="molecule type" value="mRNA"/>
</dbReference>
<dbReference type="RefSeq" id="NP_445877.1">
    <property type="nucleotide sequence ID" value="NM_053425.1"/>
</dbReference>
<dbReference type="SMR" id="Q9JK72"/>
<dbReference type="FunCoup" id="Q9JK72">
    <property type="interactions" value="692"/>
</dbReference>
<dbReference type="IntAct" id="Q9JK72">
    <property type="interactions" value="1"/>
</dbReference>
<dbReference type="STRING" id="10116.ENSRNOP00000065189"/>
<dbReference type="iPTMnet" id="Q9JK72"/>
<dbReference type="PhosphoSitePlus" id="Q9JK72"/>
<dbReference type="jPOST" id="Q9JK72"/>
<dbReference type="PaxDb" id="10116-ENSRNOP00000026670"/>
<dbReference type="GeneID" id="84485"/>
<dbReference type="KEGG" id="rno:84485"/>
<dbReference type="UCSC" id="RGD:620403">
    <property type="organism name" value="rat"/>
</dbReference>
<dbReference type="AGR" id="RGD:620403"/>
<dbReference type="CTD" id="9973"/>
<dbReference type="RGD" id="620403">
    <property type="gene designation" value="Ccs"/>
</dbReference>
<dbReference type="eggNOG" id="KOG4656">
    <property type="taxonomic scope" value="Eukaryota"/>
</dbReference>
<dbReference type="InParanoid" id="Q9JK72"/>
<dbReference type="OrthoDB" id="9584at9989"/>
<dbReference type="PhylomeDB" id="Q9JK72"/>
<dbReference type="TreeFam" id="TF105184"/>
<dbReference type="Reactome" id="R-RNO-3299685">
    <property type="pathway name" value="Detoxification of Reactive Oxygen Species"/>
</dbReference>
<dbReference type="PRO" id="PR:Q9JK72"/>
<dbReference type="Proteomes" id="UP000002494">
    <property type="component" value="Unplaced"/>
</dbReference>
<dbReference type="GO" id="GO:0005737">
    <property type="term" value="C:cytoplasm"/>
    <property type="evidence" value="ECO:0000266"/>
    <property type="project" value="RGD"/>
</dbReference>
<dbReference type="GO" id="GO:0005634">
    <property type="term" value="C:nucleus"/>
    <property type="evidence" value="ECO:0000266"/>
    <property type="project" value="RGD"/>
</dbReference>
<dbReference type="GO" id="GO:0005507">
    <property type="term" value="F:copper ion binding"/>
    <property type="evidence" value="ECO:0000266"/>
    <property type="project" value="RGD"/>
</dbReference>
<dbReference type="GO" id="GO:0019899">
    <property type="term" value="F:enzyme binding"/>
    <property type="evidence" value="ECO:0000314"/>
    <property type="project" value="RGD"/>
</dbReference>
<dbReference type="GO" id="GO:0016532">
    <property type="term" value="F:superoxide dismutase copper chaperone activity"/>
    <property type="evidence" value="ECO:0000318"/>
    <property type="project" value="GO_Central"/>
</dbReference>
<dbReference type="GO" id="GO:0019430">
    <property type="term" value="P:removal of superoxide radicals"/>
    <property type="evidence" value="ECO:0000318"/>
    <property type="project" value="GO_Central"/>
</dbReference>
<dbReference type="CDD" id="cd00305">
    <property type="entry name" value="Cu-Zn_Superoxide_Dismutase"/>
    <property type="match status" value="1"/>
</dbReference>
<dbReference type="CDD" id="cd00371">
    <property type="entry name" value="HMA"/>
    <property type="match status" value="1"/>
</dbReference>
<dbReference type="FunFam" id="2.60.40.200:FF:000004">
    <property type="entry name" value="Copper chaperone for superoxide dismutase"/>
    <property type="match status" value="1"/>
</dbReference>
<dbReference type="FunFam" id="3.30.70.100:FF:000027">
    <property type="entry name" value="Copper chaperone for superoxide dismutase"/>
    <property type="match status" value="1"/>
</dbReference>
<dbReference type="Gene3D" id="3.30.70.100">
    <property type="match status" value="1"/>
</dbReference>
<dbReference type="Gene3D" id="2.60.40.200">
    <property type="entry name" value="Superoxide dismutase, copper/zinc binding domain"/>
    <property type="match status" value="1"/>
</dbReference>
<dbReference type="InterPro" id="IPR006121">
    <property type="entry name" value="HMA_dom"/>
</dbReference>
<dbReference type="InterPro" id="IPR036163">
    <property type="entry name" value="HMA_dom_sf"/>
</dbReference>
<dbReference type="InterPro" id="IPR036423">
    <property type="entry name" value="SOD-like_Cu/Zn_dom_sf"/>
</dbReference>
<dbReference type="InterPro" id="IPR024134">
    <property type="entry name" value="SOD_Cu/Zn_/chaperone"/>
</dbReference>
<dbReference type="InterPro" id="IPR018152">
    <property type="entry name" value="SOD_Cu/Zn_BS"/>
</dbReference>
<dbReference type="InterPro" id="IPR001424">
    <property type="entry name" value="SOD_Cu_Zn_dom"/>
</dbReference>
<dbReference type="PANTHER" id="PTHR10003">
    <property type="entry name" value="SUPEROXIDE DISMUTASE CU-ZN -RELATED"/>
    <property type="match status" value="1"/>
</dbReference>
<dbReference type="Pfam" id="PF00403">
    <property type="entry name" value="HMA"/>
    <property type="match status" value="1"/>
</dbReference>
<dbReference type="Pfam" id="PF00080">
    <property type="entry name" value="Sod_Cu"/>
    <property type="match status" value="1"/>
</dbReference>
<dbReference type="PRINTS" id="PR00068">
    <property type="entry name" value="CUZNDISMTASE"/>
</dbReference>
<dbReference type="SUPFAM" id="SSF49329">
    <property type="entry name" value="Cu,Zn superoxide dismutase-like"/>
    <property type="match status" value="1"/>
</dbReference>
<dbReference type="SUPFAM" id="SSF55008">
    <property type="entry name" value="HMA, heavy metal-associated domain"/>
    <property type="match status" value="1"/>
</dbReference>
<dbReference type="PROSITE" id="PS50846">
    <property type="entry name" value="HMA_2"/>
    <property type="match status" value="1"/>
</dbReference>
<dbReference type="PROSITE" id="PS00332">
    <property type="entry name" value="SOD_CU_ZN_2"/>
    <property type="match status" value="1"/>
</dbReference>
<accession>Q9JK72</accession>
<accession>B0BMW1</accession>
<evidence type="ECO:0000250" key="1"/>
<evidence type="ECO:0000250" key="2">
    <source>
        <dbReference type="UniProtKB" id="O14618"/>
    </source>
</evidence>
<evidence type="ECO:0000255" key="3">
    <source>
        <dbReference type="PROSITE-ProRule" id="PRU00280"/>
    </source>
</evidence>
<evidence type="ECO:0000305" key="4"/>
<evidence type="ECO:0000312" key="5">
    <source>
        <dbReference type="RGD" id="620403"/>
    </source>
</evidence>
<protein>
    <recommendedName>
        <fullName evidence="4">Copper chaperone for superoxide dismutase</fullName>
    </recommendedName>
    <alternativeName>
        <fullName>Superoxide dismutase copper chaperone</fullName>
    </alternativeName>
</protein>
<organism>
    <name type="scientific">Rattus norvegicus</name>
    <name type="common">Rat</name>
    <dbReference type="NCBI Taxonomy" id="10116"/>
    <lineage>
        <taxon>Eukaryota</taxon>
        <taxon>Metazoa</taxon>
        <taxon>Chordata</taxon>
        <taxon>Craniata</taxon>
        <taxon>Vertebrata</taxon>
        <taxon>Euteleostomi</taxon>
        <taxon>Mammalia</taxon>
        <taxon>Eutheria</taxon>
        <taxon>Euarchontoglires</taxon>
        <taxon>Glires</taxon>
        <taxon>Rodentia</taxon>
        <taxon>Myomorpha</taxon>
        <taxon>Muroidea</taxon>
        <taxon>Muridae</taxon>
        <taxon>Murinae</taxon>
        <taxon>Rattus</taxon>
    </lineage>
</organism>
<proteinExistence type="evidence at protein level"/>
<gene>
    <name evidence="5" type="primary">Ccs</name>
</gene>
<feature type="chain" id="PRO_0000213546" description="Copper chaperone for superoxide dismutase">
    <location>
        <begin position="1"/>
        <end position="274"/>
    </location>
</feature>
<feature type="domain" description="HMA" evidence="3">
    <location>
        <begin position="11"/>
        <end position="74"/>
    </location>
</feature>
<feature type="region of interest" description="Superoxide dismutase-like">
    <location>
        <begin position="88"/>
        <end position="234"/>
    </location>
</feature>
<feature type="binding site" evidence="3">
    <location>
        <position position="22"/>
    </location>
    <ligand>
        <name>Cu cation</name>
        <dbReference type="ChEBI" id="CHEBI:23378"/>
        <label>1</label>
    </ligand>
</feature>
<feature type="binding site" evidence="3">
    <location>
        <position position="25"/>
    </location>
    <ligand>
        <name>Cu cation</name>
        <dbReference type="ChEBI" id="CHEBI:23378"/>
        <label>1</label>
    </ligand>
</feature>
<feature type="binding site">
    <location>
        <position position="147"/>
    </location>
    <ligand>
        <name>Zn(2+)</name>
        <dbReference type="ChEBI" id="CHEBI:29105"/>
    </ligand>
</feature>
<feature type="binding site">
    <location>
        <position position="155"/>
    </location>
    <ligand>
        <name>Zn(2+)</name>
        <dbReference type="ChEBI" id="CHEBI:29105"/>
    </ligand>
</feature>
<feature type="binding site">
    <location>
        <position position="164"/>
    </location>
    <ligand>
        <name>Zn(2+)</name>
        <dbReference type="ChEBI" id="CHEBI:29105"/>
    </ligand>
</feature>
<feature type="binding site">
    <location>
        <position position="167"/>
    </location>
    <ligand>
        <name>Zn(2+)</name>
        <dbReference type="ChEBI" id="CHEBI:29105"/>
    </ligand>
</feature>
<feature type="binding site">
    <location>
        <position position="244"/>
    </location>
    <ligand>
        <name>Cu cation</name>
        <dbReference type="ChEBI" id="CHEBI:23378"/>
        <label>2</label>
    </ligand>
</feature>
<feature type="binding site">
    <location>
        <position position="246"/>
    </location>
    <ligand>
        <name>Cu cation</name>
        <dbReference type="ChEBI" id="CHEBI:23378"/>
        <label>2</label>
    </ligand>
</feature>
<feature type="modified residue" description="Phosphoserine" evidence="2">
    <location>
        <position position="267"/>
    </location>
</feature>
<feature type="disulfide bond" evidence="1">
    <location>
        <begin position="141"/>
        <end position="227"/>
    </location>
</feature>
<feature type="cross-link" description="Glycyl lysine isopeptide (Lys-Gly) (interchain with G-Cter in ubiquitin)" evidence="2">
    <location>
        <position position="76"/>
    </location>
</feature>
<feature type="cross-link" description="Glycyl lysine isopeptide (Lys-Gly) (interchain with G-Cter in ubiquitin)" evidence="2">
    <location>
        <position position="189"/>
    </location>
</feature>
<feature type="cross-link" description="Glycyl lysine isopeptide (Lys-Gly) (interchain with G-Cter in ubiquitin)" evidence="2">
    <location>
        <position position="216"/>
    </location>
</feature>
<feature type="cross-link" description="Glycyl lysine isopeptide (Lys-Gly) (interchain with G-Cter in ubiquitin)" evidence="2">
    <location>
        <position position="241"/>
    </location>
</feature>
<feature type="sequence conflict" description="In Ref. 2; AAI58587." evidence="4" ref="2">
    <original>V</original>
    <variation>I</variation>
    <location>
        <position position="99"/>
    </location>
</feature>
<sequence>MASKSGDGGTMCALEFTVQMSCQSCVDAVHKTLKGAAGVQNVEVQLENQMVLVQTTLPSQEVQALLESTGRQAVLKGMGSSQLKNLGAAVAIMEGSGTVQGVVRFLQLSSELCLIEGTIDGLEPGLHGLHVHQYGDLTKDCSSCGDHFNPDGASHGGPQDTDRHRGDLGNVHAEASGRATFRIEDKQLKVWDVIGRSLVVDEGEDDLGRGGHPLSKVTGNSGKRLACGIIARSAGLFQNPKQICSCDGLTIWEERGRPIAGQGRKDSAQPPAHL</sequence>
<reference key="1">
    <citation type="journal article" date="2000" name="Biochem. Biophys. Res. Commun.">
        <title>Molecular cloning and characterization of a copper chaperone for copper/zinc superoxide dismutase from the rat.</title>
        <authorList>
            <person name="Hiromura M."/>
            <person name="Chino H."/>
            <person name="Sonoda T."/>
            <person name="Sakurai H."/>
        </authorList>
    </citation>
    <scope>NUCLEOTIDE SEQUENCE [MRNA]</scope>
    <scope>SUBUNIT</scope>
    <source>
        <strain>Sprague-Dawley</strain>
    </source>
</reference>
<reference key="2">
    <citation type="journal article" date="2004" name="Genome Res.">
        <title>The status, quality, and expansion of the NIH full-length cDNA project: the Mammalian Gene Collection (MGC).</title>
        <authorList>
            <consortium name="The MGC Project Team"/>
        </authorList>
    </citation>
    <scope>NUCLEOTIDE SEQUENCE [LARGE SCALE MRNA]</scope>
    <source>
        <tissue>Spleen</tissue>
    </source>
</reference>
<comment type="function">
    <text evidence="1">Delivers copper to copper zinc superoxide dismutase (SOD1).</text>
</comment>
<comment type="cofactor">
    <cofactor evidence="2">
        <name>Cu(2+)</name>
        <dbReference type="ChEBI" id="CHEBI:29036"/>
    </cofactor>
    <text evidence="2">Binds 2 copper ions per subunit.</text>
</comment>
<comment type="cofactor">
    <cofactor evidence="2">
        <name>Zn(2+)</name>
        <dbReference type="ChEBI" id="CHEBI:29105"/>
    </cofactor>
    <text evidence="2">Binds 1 zinc ion per subunit.</text>
</comment>
<comment type="subunit">
    <text evidence="2">Homodimer, and heterodimer with SOD1. Interacts with COMMD1. Interacts with XIAP/BIRC4. Interacts with SLC31A1(via C-terminal domain); this interaction is Cu(1+)-mediated. The heterodimer CCS:SOD1 interacts with SLC31A1; this heterotrimer is Cu(1+)-mediated and its maintenance is regulated through SOD1 activation.</text>
</comment>
<comment type="subcellular location">
    <subcellularLocation>
        <location evidence="1">Cytoplasm</location>
    </subcellularLocation>
</comment>
<comment type="PTM">
    <text>Ubiquitinion by XIAP/BIRC4 leads to enhancement of its chaperone activity toward its physiologic target, SOD1, rather than proteasomal degradation. XIAP/BIRC4 preferentially ubiquitinates at Lys-241.</text>
</comment>
<comment type="similarity">
    <text evidence="4">In the C-terminal section; belongs to the Cu-Zn superoxide dismutase family.</text>
</comment>
<name>CCS_RAT</name>
<keyword id="KW-0143">Chaperone</keyword>
<keyword id="KW-0186">Copper</keyword>
<keyword id="KW-0963">Cytoplasm</keyword>
<keyword id="KW-1015">Disulfide bond</keyword>
<keyword id="KW-1017">Isopeptide bond</keyword>
<keyword id="KW-0479">Metal-binding</keyword>
<keyword id="KW-0597">Phosphoprotein</keyword>
<keyword id="KW-1185">Reference proteome</keyword>
<keyword id="KW-0832">Ubl conjugation</keyword>
<keyword id="KW-0862">Zinc</keyword>